<evidence type="ECO:0000255" key="1">
    <source>
        <dbReference type="HAMAP-Rule" id="MF_00378"/>
    </source>
</evidence>
<proteinExistence type="inferred from homology"/>
<gene>
    <name evidence="1" type="primary">xseA</name>
    <name type="ordered locus">Cyan7425_3117</name>
</gene>
<name>EX7L_CYAP4</name>
<feature type="chain" id="PRO_1000200668" description="Exodeoxyribonuclease 7 large subunit">
    <location>
        <begin position="1"/>
        <end position="424"/>
    </location>
</feature>
<comment type="function">
    <text evidence="1">Bidirectionally degrades single-stranded DNA into large acid-insoluble oligonucleotides, which are then degraded further into small acid-soluble oligonucleotides.</text>
</comment>
<comment type="catalytic activity">
    <reaction evidence="1">
        <text>Exonucleolytic cleavage in either 5'- to 3'- or 3'- to 5'-direction to yield nucleoside 5'-phosphates.</text>
        <dbReference type="EC" id="3.1.11.6"/>
    </reaction>
</comment>
<comment type="subunit">
    <text evidence="1">Heterooligomer composed of large and small subunits.</text>
</comment>
<comment type="subcellular location">
    <subcellularLocation>
        <location evidence="1">Cytoplasm</location>
    </subcellularLocation>
</comment>
<comment type="similarity">
    <text evidence="1">Belongs to the XseA family.</text>
</comment>
<sequence length="424" mass="47239">MSFTQPNLLFPPTVLSVGGLTQYIQTLLEQDEELMQVWVTGEVSSASQHRSGLFFTLQDPDERVALRCIVWASQLEKLSILPVPGEQVILLGRIRVYPQRGEYQLMVWQALPAGEGLMALRYRQLRDRLETEGLFDPARKRPLPPHPQTIAVVTSPQAAAWGDIQRTLSHRYPGLRVLLSPALVQGDQAPDSIVAAIERVEKDGRAEVLILSRGGGATEDMACFNHERVVRAIAECSIPVIAGIGHQRDESLADLVADVHVHTPTAAAQLAVPDLAELYTEHCQRLDHLITAGQTRLALAQNQLQHQNRRLKRLPLERQLVQEGRAIAHLKQQLIQTVSQQLQQRLTHQQLLAQKLQSLDPRAILQRGYAIARRQNGQILRTIAALQEGDDLTLQLSDGQVKVQVRKIMAAGTGHEAESEQMEL</sequence>
<reference key="1">
    <citation type="journal article" date="2011" name="MBio">
        <title>Novel metabolic attributes of the genus Cyanothece, comprising a group of unicellular nitrogen-fixing Cyanobacteria.</title>
        <authorList>
            <person name="Bandyopadhyay A."/>
            <person name="Elvitigala T."/>
            <person name="Welsh E."/>
            <person name="Stockel J."/>
            <person name="Liberton M."/>
            <person name="Min H."/>
            <person name="Sherman L.A."/>
            <person name="Pakrasi H.B."/>
        </authorList>
    </citation>
    <scope>NUCLEOTIDE SEQUENCE [LARGE SCALE GENOMIC DNA]</scope>
    <source>
        <strain>PCC 7425 / ATCC 29141</strain>
    </source>
</reference>
<keyword id="KW-0963">Cytoplasm</keyword>
<keyword id="KW-0269">Exonuclease</keyword>
<keyword id="KW-0378">Hydrolase</keyword>
<keyword id="KW-0540">Nuclease</keyword>
<protein>
    <recommendedName>
        <fullName evidence="1">Exodeoxyribonuclease 7 large subunit</fullName>
        <ecNumber evidence="1">3.1.11.6</ecNumber>
    </recommendedName>
    <alternativeName>
        <fullName evidence="1">Exodeoxyribonuclease VII large subunit</fullName>
        <shortName evidence="1">Exonuclease VII large subunit</shortName>
    </alternativeName>
</protein>
<dbReference type="EC" id="3.1.11.6" evidence="1"/>
<dbReference type="EMBL" id="CP001344">
    <property type="protein sequence ID" value="ACL45445.1"/>
    <property type="molecule type" value="Genomic_DNA"/>
</dbReference>
<dbReference type="SMR" id="B8HMX6"/>
<dbReference type="STRING" id="395961.Cyan7425_3117"/>
<dbReference type="KEGG" id="cyn:Cyan7425_3117"/>
<dbReference type="eggNOG" id="COG1570">
    <property type="taxonomic scope" value="Bacteria"/>
</dbReference>
<dbReference type="HOGENOM" id="CLU_023625_3_1_3"/>
<dbReference type="OrthoDB" id="9802795at2"/>
<dbReference type="GO" id="GO:0005737">
    <property type="term" value="C:cytoplasm"/>
    <property type="evidence" value="ECO:0007669"/>
    <property type="project" value="UniProtKB-SubCell"/>
</dbReference>
<dbReference type="GO" id="GO:0009318">
    <property type="term" value="C:exodeoxyribonuclease VII complex"/>
    <property type="evidence" value="ECO:0007669"/>
    <property type="project" value="InterPro"/>
</dbReference>
<dbReference type="GO" id="GO:0008855">
    <property type="term" value="F:exodeoxyribonuclease VII activity"/>
    <property type="evidence" value="ECO:0007669"/>
    <property type="project" value="UniProtKB-UniRule"/>
</dbReference>
<dbReference type="GO" id="GO:0003676">
    <property type="term" value="F:nucleic acid binding"/>
    <property type="evidence" value="ECO:0007669"/>
    <property type="project" value="InterPro"/>
</dbReference>
<dbReference type="GO" id="GO:0006308">
    <property type="term" value="P:DNA catabolic process"/>
    <property type="evidence" value="ECO:0007669"/>
    <property type="project" value="UniProtKB-UniRule"/>
</dbReference>
<dbReference type="CDD" id="cd04489">
    <property type="entry name" value="ExoVII_LU_OBF"/>
    <property type="match status" value="1"/>
</dbReference>
<dbReference type="HAMAP" id="MF_00378">
    <property type="entry name" value="Exonuc_7_L"/>
    <property type="match status" value="1"/>
</dbReference>
<dbReference type="InterPro" id="IPR003753">
    <property type="entry name" value="Exonuc_VII_L"/>
</dbReference>
<dbReference type="InterPro" id="IPR020579">
    <property type="entry name" value="Exonuc_VII_lsu_C"/>
</dbReference>
<dbReference type="InterPro" id="IPR025824">
    <property type="entry name" value="OB-fold_nuc-bd_dom"/>
</dbReference>
<dbReference type="NCBIfam" id="TIGR00237">
    <property type="entry name" value="xseA"/>
    <property type="match status" value="1"/>
</dbReference>
<dbReference type="PANTHER" id="PTHR30008">
    <property type="entry name" value="EXODEOXYRIBONUCLEASE 7 LARGE SUBUNIT"/>
    <property type="match status" value="1"/>
</dbReference>
<dbReference type="PANTHER" id="PTHR30008:SF0">
    <property type="entry name" value="EXODEOXYRIBONUCLEASE 7 LARGE SUBUNIT"/>
    <property type="match status" value="1"/>
</dbReference>
<dbReference type="Pfam" id="PF02601">
    <property type="entry name" value="Exonuc_VII_L"/>
    <property type="match status" value="2"/>
</dbReference>
<dbReference type="Pfam" id="PF13742">
    <property type="entry name" value="tRNA_anti_2"/>
    <property type="match status" value="1"/>
</dbReference>
<organism>
    <name type="scientific">Cyanothece sp. (strain PCC 7425 / ATCC 29141)</name>
    <dbReference type="NCBI Taxonomy" id="395961"/>
    <lineage>
        <taxon>Bacteria</taxon>
        <taxon>Bacillati</taxon>
        <taxon>Cyanobacteriota</taxon>
        <taxon>Cyanophyceae</taxon>
        <taxon>Gomontiellales</taxon>
        <taxon>Cyanothecaceae</taxon>
        <taxon>Cyanothece</taxon>
    </lineage>
</organism>
<accession>B8HMX6</accession>